<accession>Q8ZP57</accession>
<sequence length="457" mass="52302">MPFTFQIGNHSCQISERYLRDIIDNKREHVFSTCEKFIDFFRNIFTRRSLISDYREIYNLLCQKKEHPDIKGPFSPGPFSKRDEDCTRWRPLLGYIKLIDASRPETIDKYTVEVLAHQENMLLLQMFYDGVLVTETECSERCVDFLKETMFNYNNGEITLAALGNDNLPPSEAGSNGIYEAFEQRLIDFLTTPATASGYESGAIDQTDASQPAAIEAFINSPEFQKNIRMRDIEKNKIGSGSYGTVYRLHDDFVVKIPVNERGIKVDVNSPEHRNCHPDRVSKYLNMANDDKNFSRSAIMNINGKDVTVLVSKYIQGQEFDVEDEDNYRMAEALLKSRGVYMHDINILGNILVKEGVLFFVDGDQIVLSQESRQQRSVSLATRQLEEQIKAHHMIKLKRAETEGNTEDVEYYKSLITDLDALIGEEEQTPAPGRRFKLAAPEEGTLVAKVLKDELKK</sequence>
<reference key="1">
    <citation type="journal article" date="2001" name="Nature">
        <title>Complete genome sequence of Salmonella enterica serovar Typhimurium LT2.</title>
        <authorList>
            <person name="McClelland M."/>
            <person name="Sanderson K.E."/>
            <person name="Spieth J."/>
            <person name="Clifton S.W."/>
            <person name="Latreille P."/>
            <person name="Courtney L."/>
            <person name="Porwollik S."/>
            <person name="Ali J."/>
            <person name="Dante M."/>
            <person name="Du F."/>
            <person name="Hou S."/>
            <person name="Layman D."/>
            <person name="Leonard S."/>
            <person name="Nguyen C."/>
            <person name="Scott K."/>
            <person name="Holmes A."/>
            <person name="Grewal N."/>
            <person name="Mulvaney E."/>
            <person name="Ryan E."/>
            <person name="Sun H."/>
            <person name="Florea L."/>
            <person name="Miller W."/>
            <person name="Stoneking T."/>
            <person name="Nhan M."/>
            <person name="Waterston R."/>
            <person name="Wilson R.K."/>
        </authorList>
    </citation>
    <scope>NUCLEOTIDE SEQUENCE [LARGE SCALE GENOMIC DNA]</scope>
    <source>
        <strain>LT2 / SGSC1412 / ATCC 700720</strain>
    </source>
</reference>
<reference key="2">
    <citation type="journal article" date="2008" name="Cell. Microbiol.">
        <title>SteC is a Salmonella kinase required for SPI-2-dependent F-actin remodelling.</title>
        <authorList>
            <person name="Poh J."/>
            <person name="Odendall C."/>
            <person name="Spanos A."/>
            <person name="Boyle C."/>
            <person name="Liu M."/>
            <person name="Freemont P."/>
            <person name="Holden D.W."/>
        </authorList>
    </citation>
    <scope>FUNCTION AS A KINASE</scope>
    <scope>SUBCELLULAR LOCATION</scope>
    <scope>SECRETION VIA TYPE III SECRETION SYSTEM</scope>
    <scope>INDUCTION</scope>
    <scope>AUTOPHOSPHORYLATION</scope>
    <scope>MUTAGENESIS OF LYS-256</scope>
    <source>
        <strain>ATCC 14028 / SGSC 2980 / CDC 6516-60 / NCTC 12023</strain>
    </source>
</reference>
<reference key="3">
    <citation type="journal article" date="2010" name="Infect. Immun.">
        <title>Systematic analysis of the SsrAB virulon of Salmonella enterica.</title>
        <authorList>
            <person name="Xu X."/>
            <person name="Hensel M."/>
        </authorList>
    </citation>
    <scope>INDUCTION</scope>
    <source>
        <strain evidence="4">ATCC 14028 / SGSC 2980 / CDC 6516-60 / NCTC 12023</strain>
    </source>
</reference>
<evidence type="ECO:0000255" key="1"/>
<evidence type="ECO:0000269" key="2">
    <source>
    </source>
</evidence>
<evidence type="ECO:0000269" key="3">
    <source>
    </source>
</evidence>
<evidence type="ECO:0000303" key="4">
    <source>
    </source>
</evidence>
<evidence type="ECO:0000305" key="5"/>
<dbReference type="EC" id="2.7.-.-"/>
<dbReference type="EMBL" id="AE006468">
    <property type="protein sequence ID" value="AAL20615.1"/>
    <property type="molecule type" value="Genomic_DNA"/>
</dbReference>
<dbReference type="RefSeq" id="NP_460656.1">
    <property type="nucleotide sequence ID" value="NC_003197.2"/>
</dbReference>
<dbReference type="RefSeq" id="WP_001116926.1">
    <property type="nucleotide sequence ID" value="NC_003197.2"/>
</dbReference>
<dbReference type="SMR" id="Q8ZP57"/>
<dbReference type="STRING" id="99287.STM1698"/>
<dbReference type="PaxDb" id="99287-STM1698"/>
<dbReference type="GeneID" id="1253216"/>
<dbReference type="KEGG" id="stm:STM1698"/>
<dbReference type="PATRIC" id="fig|99287.12.peg.1793"/>
<dbReference type="HOGENOM" id="CLU_041541_0_0_6"/>
<dbReference type="OMA" id="FHIGNHS"/>
<dbReference type="BioCyc" id="SENT99287:STM1698-MONOMER"/>
<dbReference type="Proteomes" id="UP000001014">
    <property type="component" value="Chromosome"/>
</dbReference>
<dbReference type="GO" id="GO:0005576">
    <property type="term" value="C:extracellular region"/>
    <property type="evidence" value="ECO:0007669"/>
    <property type="project" value="UniProtKB-SubCell"/>
</dbReference>
<dbReference type="GO" id="GO:0043657">
    <property type="term" value="C:host cell"/>
    <property type="evidence" value="ECO:0000314"/>
    <property type="project" value="UniProtKB"/>
</dbReference>
<dbReference type="GO" id="GO:0030430">
    <property type="term" value="C:host cell cytoplasm"/>
    <property type="evidence" value="ECO:0007669"/>
    <property type="project" value="UniProtKB-SubCell"/>
</dbReference>
<dbReference type="GO" id="GO:0005524">
    <property type="term" value="F:ATP binding"/>
    <property type="evidence" value="ECO:0007669"/>
    <property type="project" value="UniProtKB-KW"/>
</dbReference>
<dbReference type="GO" id="GO:0016301">
    <property type="term" value="F:kinase activity"/>
    <property type="evidence" value="ECO:0000314"/>
    <property type="project" value="UniProtKB"/>
</dbReference>
<dbReference type="GO" id="GO:0046777">
    <property type="term" value="P:protein autophosphorylation"/>
    <property type="evidence" value="ECO:0000314"/>
    <property type="project" value="UniProtKB"/>
</dbReference>
<dbReference type="GO" id="GO:0030254">
    <property type="term" value="P:protein secretion by the type III secretion system"/>
    <property type="evidence" value="ECO:0000314"/>
    <property type="project" value="UniProtKB"/>
</dbReference>
<comment type="function">
    <text evidence="2">Effector proteins function to alter host cell physiology and promote bacterial survival in host tissues. This protein is a kinase, which is required for SPI-2 T3SS-dependent F-actin meshwork formation in infected host cells.</text>
</comment>
<comment type="subcellular location">
    <subcellularLocation>
        <location evidence="2">Secreted</location>
    </subcellularLocation>
    <subcellularLocation>
        <location evidence="2">Host cytoplasm</location>
    </subcellularLocation>
    <text>Secreted via type III secretion system 2 (SPI-2 T3SS), and delivered into the host cytoplasm. Localizes on or close to the Salmonella-containing vacuole (SCV) membrane, and to SPI-2-induced F-actin structures.</text>
</comment>
<comment type="induction">
    <text evidence="2 3">Expression is regulated by the two-component regulatory system SsrA/SsrB (PubMed:17645553). Highly expressed in host macrophages and when grown in an acidic environment (PubMed:19858298).</text>
</comment>
<comment type="PTM">
    <text>Autophosphorylated.</text>
</comment>
<comment type="similarity">
    <text evidence="5">Belongs to the protein kinase superfamily.</text>
</comment>
<keyword id="KW-0067">ATP-binding</keyword>
<keyword id="KW-1035">Host cytoplasm</keyword>
<keyword id="KW-0418">Kinase</keyword>
<keyword id="KW-0547">Nucleotide-binding</keyword>
<keyword id="KW-1185">Reference proteome</keyword>
<keyword id="KW-0964">Secreted</keyword>
<keyword id="KW-0808">Transferase</keyword>
<keyword id="KW-0843">Virulence</keyword>
<protein>
    <recommendedName>
        <fullName>Secreted effector kinase SteC</fullName>
        <ecNumber>2.7.-.-</ecNumber>
    </recommendedName>
    <alternativeName>
        <fullName>Salmonella translocated effector C</fullName>
    </alternativeName>
</protein>
<feature type="chain" id="PRO_0000391639" description="Secreted effector kinase SteC">
    <location>
        <begin position="1"/>
        <end position="457"/>
    </location>
</feature>
<feature type="binding site" evidence="1">
    <location>
        <position position="256"/>
    </location>
    <ligand>
        <name>ATP</name>
        <dbReference type="ChEBI" id="CHEBI:30616"/>
    </ligand>
</feature>
<feature type="mutagenesis site" description="Loss of kinase activity. No effect on translocation of the protein." evidence="2">
    <original>K</original>
    <variation>H</variation>
    <location>
        <position position="256"/>
    </location>
</feature>
<organism>
    <name type="scientific">Salmonella typhimurium (strain LT2 / SGSC1412 / ATCC 700720)</name>
    <dbReference type="NCBI Taxonomy" id="99287"/>
    <lineage>
        <taxon>Bacteria</taxon>
        <taxon>Pseudomonadati</taxon>
        <taxon>Pseudomonadota</taxon>
        <taxon>Gammaproteobacteria</taxon>
        <taxon>Enterobacterales</taxon>
        <taxon>Enterobacteriaceae</taxon>
        <taxon>Salmonella</taxon>
    </lineage>
</organism>
<gene>
    <name type="primary">steC</name>
    <name type="ordered locus">STM1698</name>
</gene>
<proteinExistence type="evidence at protein level"/>
<name>STEC_SALTY</name>